<name>DPO3E_SALTI</name>
<accession>P0A1H0</accession>
<accession>P14566</accession>
<accession>Q56055</accession>
<organism>
    <name type="scientific">Salmonella typhi</name>
    <dbReference type="NCBI Taxonomy" id="90370"/>
    <lineage>
        <taxon>Bacteria</taxon>
        <taxon>Pseudomonadati</taxon>
        <taxon>Pseudomonadota</taxon>
        <taxon>Gammaproteobacteria</taxon>
        <taxon>Enterobacterales</taxon>
        <taxon>Enterobacteriaceae</taxon>
        <taxon>Salmonella</taxon>
    </lineage>
</organism>
<comment type="function">
    <text evidence="1">DNA polymerase III is a complex, multichain enzyme responsible for most of the replicative synthesis in bacteria. The epsilon subunit contains the editing function and is a proofreading 3'-5' exonuclease (By similarity).</text>
</comment>
<comment type="catalytic activity">
    <reaction>
        <text>DNA(n) + a 2'-deoxyribonucleoside 5'-triphosphate = DNA(n+1) + diphosphate</text>
        <dbReference type="Rhea" id="RHEA:22508"/>
        <dbReference type="Rhea" id="RHEA-COMP:17339"/>
        <dbReference type="Rhea" id="RHEA-COMP:17340"/>
        <dbReference type="ChEBI" id="CHEBI:33019"/>
        <dbReference type="ChEBI" id="CHEBI:61560"/>
        <dbReference type="ChEBI" id="CHEBI:173112"/>
        <dbReference type="EC" id="2.7.7.7"/>
    </reaction>
</comment>
<comment type="cofactor">
    <cofactor evidence="1">
        <name>Mg(2+)</name>
        <dbReference type="ChEBI" id="CHEBI:18420"/>
    </cofactor>
    <cofactor evidence="1">
        <name>Mn(2+)</name>
        <dbReference type="ChEBI" id="CHEBI:29035"/>
    </cofactor>
    <text evidence="1">Binds 2 divalent metal cations. Magnesium or manganese.</text>
</comment>
<comment type="subunit">
    <text evidence="1">The DNA polymerase holoenzyme is a complex that contains 10 different types of subunits. These subunits are organized into 3 functionally essential subassemblies: the pol III core, the beta sliding clamp processivity factor and the clamp-loading complex. The pol III core (subunits alpha,epsilon and theta) contains the polymerase and the 3'-5' exonuclease proofreading activities. The polymerase is tethered to the template via the sliding clamp processivity factor. The clamp-loading complex assembles the beta processivity factor onto the primer template and plays a central role in the organization and communication at the replication fork. This complex contains delta, delta', psi and chi, and copies of either or both of two different DnaX proteins, gamma and tau. The composition of the holoenzyme is, therefore: (alpha,epsilon,theta)[2]-(gamma/tau)[3]-delta,delta', psi,chi-beta[4] (By similarity).</text>
</comment>
<dbReference type="EC" id="2.7.7.7"/>
<dbReference type="EMBL" id="AL513382">
    <property type="protein sequence ID" value="CAD08718.1"/>
    <property type="molecule type" value="Genomic_DNA"/>
</dbReference>
<dbReference type="EMBL" id="AE014613">
    <property type="protein sequence ID" value="AAO70177.1"/>
    <property type="molecule type" value="Genomic_DNA"/>
</dbReference>
<dbReference type="RefSeq" id="NP_454867.1">
    <property type="nucleotide sequence ID" value="NC_003198.1"/>
</dbReference>
<dbReference type="RefSeq" id="WP_001670675.1">
    <property type="nucleotide sequence ID" value="NZ_WSUR01000037.1"/>
</dbReference>
<dbReference type="SMR" id="P0A1H0"/>
<dbReference type="STRING" id="220341.gene:17584321"/>
<dbReference type="KEGG" id="stt:t2601"/>
<dbReference type="KEGG" id="sty:STY0285"/>
<dbReference type="PATRIC" id="fig|220341.7.peg.287"/>
<dbReference type="eggNOG" id="COG0847">
    <property type="taxonomic scope" value="Bacteria"/>
</dbReference>
<dbReference type="HOGENOM" id="CLU_047806_2_0_6"/>
<dbReference type="OMA" id="FHVYLNP"/>
<dbReference type="OrthoDB" id="9804290at2"/>
<dbReference type="Proteomes" id="UP000000541">
    <property type="component" value="Chromosome"/>
</dbReference>
<dbReference type="Proteomes" id="UP000002670">
    <property type="component" value="Chromosome"/>
</dbReference>
<dbReference type="GO" id="GO:0005829">
    <property type="term" value="C:cytosol"/>
    <property type="evidence" value="ECO:0007669"/>
    <property type="project" value="TreeGrafter"/>
</dbReference>
<dbReference type="GO" id="GO:0008408">
    <property type="term" value="F:3'-5' exonuclease activity"/>
    <property type="evidence" value="ECO:0007669"/>
    <property type="project" value="TreeGrafter"/>
</dbReference>
<dbReference type="GO" id="GO:0003677">
    <property type="term" value="F:DNA binding"/>
    <property type="evidence" value="ECO:0007669"/>
    <property type="project" value="InterPro"/>
</dbReference>
<dbReference type="GO" id="GO:0003887">
    <property type="term" value="F:DNA-directed DNA polymerase activity"/>
    <property type="evidence" value="ECO:0007669"/>
    <property type="project" value="UniProtKB-KW"/>
</dbReference>
<dbReference type="GO" id="GO:0046872">
    <property type="term" value="F:metal ion binding"/>
    <property type="evidence" value="ECO:0007669"/>
    <property type="project" value="UniProtKB-KW"/>
</dbReference>
<dbReference type="GO" id="GO:0045004">
    <property type="term" value="P:DNA replication proofreading"/>
    <property type="evidence" value="ECO:0007669"/>
    <property type="project" value="TreeGrafter"/>
</dbReference>
<dbReference type="CDD" id="cd06131">
    <property type="entry name" value="DNA_pol_III_epsilon_Ecoli_like"/>
    <property type="match status" value="1"/>
</dbReference>
<dbReference type="FunFam" id="3.30.420.10:FF:000012">
    <property type="entry name" value="DNA polymerase III subunit epsilon"/>
    <property type="match status" value="1"/>
</dbReference>
<dbReference type="Gene3D" id="3.20.20.140">
    <property type="entry name" value="Metal-dependent hydrolases"/>
    <property type="match status" value="1"/>
</dbReference>
<dbReference type="Gene3D" id="3.30.420.10">
    <property type="entry name" value="Ribonuclease H-like superfamily/Ribonuclease H"/>
    <property type="match status" value="1"/>
</dbReference>
<dbReference type="InterPro" id="IPR006054">
    <property type="entry name" value="DnaQ"/>
</dbReference>
<dbReference type="InterPro" id="IPR006309">
    <property type="entry name" value="DnaQ_proteo"/>
</dbReference>
<dbReference type="InterPro" id="IPR013520">
    <property type="entry name" value="Exonuclease_RNaseT/DNA_pol3"/>
</dbReference>
<dbReference type="InterPro" id="IPR012337">
    <property type="entry name" value="RNaseH-like_sf"/>
</dbReference>
<dbReference type="InterPro" id="IPR036397">
    <property type="entry name" value="RNaseH_sf"/>
</dbReference>
<dbReference type="NCBIfam" id="TIGR00573">
    <property type="entry name" value="dnaq"/>
    <property type="match status" value="1"/>
</dbReference>
<dbReference type="NCBIfam" id="TIGR01406">
    <property type="entry name" value="dnaQ_proteo"/>
    <property type="match status" value="1"/>
</dbReference>
<dbReference type="NCBIfam" id="NF004316">
    <property type="entry name" value="PRK05711.1"/>
    <property type="match status" value="1"/>
</dbReference>
<dbReference type="PANTHER" id="PTHR30231">
    <property type="entry name" value="DNA POLYMERASE III SUBUNIT EPSILON"/>
    <property type="match status" value="1"/>
</dbReference>
<dbReference type="PANTHER" id="PTHR30231:SF41">
    <property type="entry name" value="DNA POLYMERASE III SUBUNIT EPSILON"/>
    <property type="match status" value="1"/>
</dbReference>
<dbReference type="Pfam" id="PF00929">
    <property type="entry name" value="RNase_T"/>
    <property type="match status" value="1"/>
</dbReference>
<dbReference type="SMART" id="SM00479">
    <property type="entry name" value="EXOIII"/>
    <property type="match status" value="1"/>
</dbReference>
<dbReference type="SUPFAM" id="SSF53098">
    <property type="entry name" value="Ribonuclease H-like"/>
    <property type="match status" value="1"/>
</dbReference>
<proteinExistence type="inferred from homology"/>
<keyword id="KW-0235">DNA replication</keyword>
<keyword id="KW-0239">DNA-directed DNA polymerase</keyword>
<keyword id="KW-0269">Exonuclease</keyword>
<keyword id="KW-0378">Hydrolase</keyword>
<keyword id="KW-0460">Magnesium</keyword>
<keyword id="KW-0464">Manganese</keyword>
<keyword id="KW-0479">Metal-binding</keyword>
<keyword id="KW-0540">Nuclease</keyword>
<keyword id="KW-0548">Nucleotidyltransferase</keyword>
<keyword id="KW-0808">Transferase</keyword>
<gene>
    <name type="primary">dnaQ</name>
    <name type="synonym">mutD</name>
    <name type="ordered locus">STY0285</name>
    <name type="ordered locus">t2601</name>
</gene>
<reference key="1">
    <citation type="journal article" date="2001" name="Nature">
        <title>Complete genome sequence of a multiple drug resistant Salmonella enterica serovar Typhi CT18.</title>
        <authorList>
            <person name="Parkhill J."/>
            <person name="Dougan G."/>
            <person name="James K.D."/>
            <person name="Thomson N.R."/>
            <person name="Pickard D."/>
            <person name="Wain J."/>
            <person name="Churcher C.M."/>
            <person name="Mungall K.L."/>
            <person name="Bentley S.D."/>
            <person name="Holden M.T.G."/>
            <person name="Sebaihia M."/>
            <person name="Baker S."/>
            <person name="Basham D."/>
            <person name="Brooks K."/>
            <person name="Chillingworth T."/>
            <person name="Connerton P."/>
            <person name="Cronin A."/>
            <person name="Davis P."/>
            <person name="Davies R.M."/>
            <person name="Dowd L."/>
            <person name="White N."/>
            <person name="Farrar J."/>
            <person name="Feltwell T."/>
            <person name="Hamlin N."/>
            <person name="Haque A."/>
            <person name="Hien T.T."/>
            <person name="Holroyd S."/>
            <person name="Jagels K."/>
            <person name="Krogh A."/>
            <person name="Larsen T.S."/>
            <person name="Leather S."/>
            <person name="Moule S."/>
            <person name="O'Gaora P."/>
            <person name="Parry C."/>
            <person name="Quail M.A."/>
            <person name="Rutherford K.M."/>
            <person name="Simmonds M."/>
            <person name="Skelton J."/>
            <person name="Stevens K."/>
            <person name="Whitehead S."/>
            <person name="Barrell B.G."/>
        </authorList>
    </citation>
    <scope>NUCLEOTIDE SEQUENCE [LARGE SCALE GENOMIC DNA]</scope>
    <source>
        <strain>CT18</strain>
    </source>
</reference>
<reference key="2">
    <citation type="journal article" date="2003" name="J. Bacteriol.">
        <title>Comparative genomics of Salmonella enterica serovar Typhi strains Ty2 and CT18.</title>
        <authorList>
            <person name="Deng W."/>
            <person name="Liou S.-R."/>
            <person name="Plunkett G. III"/>
            <person name="Mayhew G.F."/>
            <person name="Rose D.J."/>
            <person name="Burland V."/>
            <person name="Kodoyianni V."/>
            <person name="Schwartz D.C."/>
            <person name="Blattner F.R."/>
        </authorList>
    </citation>
    <scope>NUCLEOTIDE SEQUENCE [LARGE SCALE GENOMIC DNA]</scope>
    <source>
        <strain>ATCC 700931 / Ty2</strain>
    </source>
</reference>
<evidence type="ECO:0000250" key="1"/>
<sequence length="243" mass="27225">MSTAITRQIVLDTETTGMNQIGAHYEGHKIIEIGAVEVINRRLTGNNFHVYLKPDRLVDPEAFGVHGIADEFLLDKPVFADVVDEFLDYIRGAELVIHNASFDIGFMDYEFGLLKRDIPKTNTFCKVTDSLALARKMFPGKRNSLDALCSRYEIDNSKRTLHGALLDAQILAEVYLAMTGGQTSMTFAMEGETQRQQGEATIQRIVRQASRLRVVFASEEELAAHESRLDLVQKKGGSCLWRA</sequence>
<feature type="chain" id="PRO_0000105484" description="DNA polymerase III subunit epsilon">
    <location>
        <begin position="1"/>
        <end position="243"/>
    </location>
</feature>
<feature type="active site" description="Proton acceptor" evidence="1">
    <location>
        <position position="162"/>
    </location>
</feature>
<feature type="binding site" evidence="1">
    <location>
        <position position="12"/>
    </location>
    <ligand>
        <name>a divalent metal cation</name>
        <dbReference type="ChEBI" id="CHEBI:60240"/>
        <label>1</label>
        <note>catalytic</note>
    </ligand>
</feature>
<feature type="binding site" evidence="1">
    <location>
        <position position="12"/>
    </location>
    <ligand>
        <name>a divalent metal cation</name>
        <dbReference type="ChEBI" id="CHEBI:60240"/>
        <label>2</label>
        <note>catalytic</note>
    </ligand>
</feature>
<feature type="binding site" evidence="1">
    <location>
        <position position="12"/>
    </location>
    <ligand>
        <name>substrate</name>
    </ligand>
</feature>
<feature type="binding site" evidence="1">
    <location>
        <position position="14"/>
    </location>
    <ligand>
        <name>a divalent metal cation</name>
        <dbReference type="ChEBI" id="CHEBI:60240"/>
        <label>1</label>
        <note>catalytic</note>
    </ligand>
</feature>
<feature type="binding site" evidence="1">
    <location>
        <position position="14"/>
    </location>
    <ligand>
        <name>substrate</name>
    </ligand>
</feature>
<feature type="binding site" evidence="1">
    <location>
        <position position="61"/>
    </location>
    <ligand>
        <name>substrate</name>
    </ligand>
</feature>
<feature type="binding site" evidence="1">
    <location>
        <position position="66"/>
    </location>
    <ligand>
        <name>substrate</name>
    </ligand>
</feature>
<feature type="binding site" evidence="1">
    <location>
        <position position="167"/>
    </location>
    <ligand>
        <name>a divalent metal cation</name>
        <dbReference type="ChEBI" id="CHEBI:60240"/>
        <label>1</label>
        <note>catalytic</note>
    </ligand>
</feature>
<feature type="binding site" evidence="1">
    <location>
        <position position="167"/>
    </location>
    <ligand>
        <name>substrate</name>
    </ligand>
</feature>
<protein>
    <recommendedName>
        <fullName>DNA polymerase III subunit epsilon</fullName>
        <ecNumber>2.7.7.7</ecNumber>
    </recommendedName>
</protein>